<keyword id="KW-0025">Alternative splicing</keyword>
<keyword id="KW-0029">Amino-acid transport</keyword>
<keyword id="KW-0472">Membrane</keyword>
<keyword id="KW-1185">Reference proteome</keyword>
<keyword id="KW-0812">Transmembrane</keyword>
<keyword id="KW-1133">Transmembrane helix</keyword>
<keyword id="KW-0813">Transport</keyword>
<reference key="1">
    <citation type="journal article" date="2000" name="Nature">
        <title>Sequence and analysis of chromosome 5 of the plant Arabidopsis thaliana.</title>
        <authorList>
            <person name="Tabata S."/>
            <person name="Kaneko T."/>
            <person name="Nakamura Y."/>
            <person name="Kotani H."/>
            <person name="Kato T."/>
            <person name="Asamizu E."/>
            <person name="Miyajima N."/>
            <person name="Sasamoto S."/>
            <person name="Kimura T."/>
            <person name="Hosouchi T."/>
            <person name="Kawashima K."/>
            <person name="Kohara M."/>
            <person name="Matsumoto M."/>
            <person name="Matsuno A."/>
            <person name="Muraki A."/>
            <person name="Nakayama S."/>
            <person name="Nakazaki N."/>
            <person name="Naruo K."/>
            <person name="Okumura S."/>
            <person name="Shinpo S."/>
            <person name="Takeuchi C."/>
            <person name="Wada T."/>
            <person name="Watanabe A."/>
            <person name="Yamada M."/>
            <person name="Yasuda M."/>
            <person name="Sato S."/>
            <person name="de la Bastide M."/>
            <person name="Huang E."/>
            <person name="Spiegel L."/>
            <person name="Gnoj L."/>
            <person name="O'Shaughnessy A."/>
            <person name="Preston R."/>
            <person name="Habermann K."/>
            <person name="Murray J."/>
            <person name="Johnson D."/>
            <person name="Rohlfing T."/>
            <person name="Nelson J."/>
            <person name="Stoneking T."/>
            <person name="Pepin K."/>
            <person name="Spieth J."/>
            <person name="Sekhon M."/>
            <person name="Armstrong J."/>
            <person name="Becker M."/>
            <person name="Belter E."/>
            <person name="Cordum H."/>
            <person name="Cordes M."/>
            <person name="Courtney L."/>
            <person name="Courtney W."/>
            <person name="Dante M."/>
            <person name="Du H."/>
            <person name="Edwards J."/>
            <person name="Fryman J."/>
            <person name="Haakensen B."/>
            <person name="Lamar E."/>
            <person name="Latreille P."/>
            <person name="Leonard S."/>
            <person name="Meyer R."/>
            <person name="Mulvaney E."/>
            <person name="Ozersky P."/>
            <person name="Riley A."/>
            <person name="Strowmatt C."/>
            <person name="Wagner-McPherson C."/>
            <person name="Wollam A."/>
            <person name="Yoakum M."/>
            <person name="Bell M."/>
            <person name="Dedhia N."/>
            <person name="Parnell L."/>
            <person name="Shah R."/>
            <person name="Rodriguez M."/>
            <person name="Hoon See L."/>
            <person name="Vil D."/>
            <person name="Baker J."/>
            <person name="Kirchoff K."/>
            <person name="Toth K."/>
            <person name="King L."/>
            <person name="Bahret A."/>
            <person name="Miller B."/>
            <person name="Marra M.A."/>
            <person name="Martienssen R."/>
            <person name="McCombie W.R."/>
            <person name="Wilson R.K."/>
            <person name="Murphy G."/>
            <person name="Bancroft I."/>
            <person name="Volckaert G."/>
            <person name="Wambutt R."/>
            <person name="Duesterhoeft A."/>
            <person name="Stiekema W."/>
            <person name="Pohl T."/>
            <person name="Entian K.-D."/>
            <person name="Terryn N."/>
            <person name="Hartley N."/>
            <person name="Bent E."/>
            <person name="Johnson S."/>
            <person name="Langham S.-A."/>
            <person name="McCullagh B."/>
            <person name="Robben J."/>
            <person name="Grymonprez B."/>
            <person name="Zimmermann W."/>
            <person name="Ramsperger U."/>
            <person name="Wedler H."/>
            <person name="Balke K."/>
            <person name="Wedler E."/>
            <person name="Peters S."/>
            <person name="van Staveren M."/>
            <person name="Dirkse W."/>
            <person name="Mooijman P."/>
            <person name="Klein Lankhorst R."/>
            <person name="Weitzenegger T."/>
            <person name="Bothe G."/>
            <person name="Rose M."/>
            <person name="Hauf J."/>
            <person name="Berneiser S."/>
            <person name="Hempel S."/>
            <person name="Feldpausch M."/>
            <person name="Lamberth S."/>
            <person name="Villarroel R."/>
            <person name="Gielen J."/>
            <person name="Ardiles W."/>
            <person name="Bents O."/>
            <person name="Lemcke K."/>
            <person name="Kolesov G."/>
            <person name="Mayer K.F.X."/>
            <person name="Rudd S."/>
            <person name="Schoof H."/>
            <person name="Schueller C."/>
            <person name="Zaccaria P."/>
            <person name="Mewes H.-W."/>
            <person name="Bevan M."/>
            <person name="Fransz P.F."/>
        </authorList>
    </citation>
    <scope>NUCLEOTIDE SEQUENCE [LARGE SCALE GENOMIC DNA]</scope>
    <source>
        <strain>cv. Columbia</strain>
    </source>
</reference>
<reference key="2">
    <citation type="journal article" date="2017" name="Plant J.">
        <title>Araport11: a complete reannotation of the Arabidopsis thaliana reference genome.</title>
        <authorList>
            <person name="Cheng C.Y."/>
            <person name="Krishnakumar V."/>
            <person name="Chan A.P."/>
            <person name="Thibaud-Nissen F."/>
            <person name="Schobel S."/>
            <person name="Town C.D."/>
        </authorList>
    </citation>
    <scope>GENOME REANNOTATION</scope>
    <source>
        <strain>cv. Columbia</strain>
    </source>
</reference>
<reference key="3">
    <citation type="journal article" date="2003" name="Science">
        <title>Empirical analysis of transcriptional activity in the Arabidopsis genome.</title>
        <authorList>
            <person name="Yamada K."/>
            <person name="Lim J."/>
            <person name="Dale J.M."/>
            <person name="Chen H."/>
            <person name="Shinn P."/>
            <person name="Palm C.J."/>
            <person name="Southwick A.M."/>
            <person name="Wu H.C."/>
            <person name="Kim C.J."/>
            <person name="Nguyen M."/>
            <person name="Pham P.K."/>
            <person name="Cheuk R.F."/>
            <person name="Karlin-Newmann G."/>
            <person name="Liu S.X."/>
            <person name="Lam B."/>
            <person name="Sakano H."/>
            <person name="Wu T."/>
            <person name="Yu G."/>
            <person name="Miranda M."/>
            <person name="Quach H.L."/>
            <person name="Tripp M."/>
            <person name="Chang C.H."/>
            <person name="Lee J.M."/>
            <person name="Toriumi M.J."/>
            <person name="Chan M.M."/>
            <person name="Tang C.C."/>
            <person name="Onodera C.S."/>
            <person name="Deng J.M."/>
            <person name="Akiyama K."/>
            <person name="Ansari Y."/>
            <person name="Arakawa T."/>
            <person name="Banh J."/>
            <person name="Banno F."/>
            <person name="Bowser L."/>
            <person name="Brooks S.Y."/>
            <person name="Carninci P."/>
            <person name="Chao Q."/>
            <person name="Choy N."/>
            <person name="Enju A."/>
            <person name="Goldsmith A.D."/>
            <person name="Gurjal M."/>
            <person name="Hansen N.F."/>
            <person name="Hayashizaki Y."/>
            <person name="Johnson-Hopson C."/>
            <person name="Hsuan V.W."/>
            <person name="Iida K."/>
            <person name="Karnes M."/>
            <person name="Khan S."/>
            <person name="Koesema E."/>
            <person name="Ishida J."/>
            <person name="Jiang P.X."/>
            <person name="Jones T."/>
            <person name="Kawai J."/>
            <person name="Kamiya A."/>
            <person name="Meyers C."/>
            <person name="Nakajima M."/>
            <person name="Narusaka M."/>
            <person name="Seki M."/>
            <person name="Sakurai T."/>
            <person name="Satou M."/>
            <person name="Tamse R."/>
            <person name="Vaysberg M."/>
            <person name="Wallender E.K."/>
            <person name="Wong C."/>
            <person name="Yamamura Y."/>
            <person name="Yuan S."/>
            <person name="Shinozaki K."/>
            <person name="Davis R.W."/>
            <person name="Theologis A."/>
            <person name="Ecker J.R."/>
        </authorList>
    </citation>
    <scope>NUCLEOTIDE SEQUENCE [LARGE SCALE MRNA]</scope>
    <source>
        <strain>cv. Columbia</strain>
    </source>
</reference>
<reference key="4">
    <citation type="journal article" date="2017" name="FEBS Lett.">
        <title>Functional identification of AtAVT3, a family of vacuolar amino acid transporters, in Arabidopsis.</title>
        <authorList>
            <person name="Fujiki Y."/>
            <person name="Teshima H."/>
            <person name="Kashiwao S."/>
            <person name="Kawano-Kawada M."/>
            <person name="Ohsumi Y."/>
            <person name="Kakinuma Y."/>
            <person name="Sekito T."/>
        </authorList>
    </citation>
    <scope>GENE FAMILY</scope>
    <scope>NOMENCLATURE</scope>
</reference>
<gene>
    <name evidence="3" type="primary">AVT1E</name>
    <name evidence="5" type="ordered locus">At5g02170</name>
    <name evidence="6" type="ORF">T7H20.220</name>
</gene>
<dbReference type="EMBL" id="AL162508">
    <property type="protein sequence ID" value="CAB82990.1"/>
    <property type="status" value="ALT_SEQ"/>
    <property type="molecule type" value="Genomic_DNA"/>
</dbReference>
<dbReference type="EMBL" id="CP002688">
    <property type="protein sequence ID" value="AED90439.1"/>
    <property type="molecule type" value="Genomic_DNA"/>
</dbReference>
<dbReference type="EMBL" id="AY102114">
    <property type="protein sequence ID" value="AAM26683.1"/>
    <property type="molecule type" value="mRNA"/>
</dbReference>
<dbReference type="EMBL" id="BT005813">
    <property type="protein sequence ID" value="AAO64748.1"/>
    <property type="molecule type" value="mRNA"/>
</dbReference>
<dbReference type="PIR" id="T48238">
    <property type="entry name" value="T48238"/>
</dbReference>
<dbReference type="RefSeq" id="NP_195837.2">
    <molecule id="Q8LPF4-1"/>
    <property type="nucleotide sequence ID" value="NM_120295.4"/>
</dbReference>
<dbReference type="SMR" id="Q8LPF4"/>
<dbReference type="FunCoup" id="Q8LPF4">
    <property type="interactions" value="203"/>
</dbReference>
<dbReference type="IntAct" id="Q8LPF4">
    <property type="interactions" value="1"/>
</dbReference>
<dbReference type="STRING" id="3702.Q8LPF4"/>
<dbReference type="iPTMnet" id="Q8LPF4"/>
<dbReference type="PaxDb" id="3702-AT5G02170.1"/>
<dbReference type="ProteomicsDB" id="241155">
    <molecule id="Q8LPF4-1"/>
</dbReference>
<dbReference type="EnsemblPlants" id="AT5G02170.1">
    <molecule id="Q8LPF4-1"/>
    <property type="protein sequence ID" value="AT5G02170.1"/>
    <property type="gene ID" value="AT5G02170"/>
</dbReference>
<dbReference type="GeneID" id="831896"/>
<dbReference type="Gramene" id="AT5G02170.1">
    <molecule id="Q8LPF4-1"/>
    <property type="protein sequence ID" value="AT5G02170.1"/>
    <property type="gene ID" value="AT5G02170"/>
</dbReference>
<dbReference type="KEGG" id="ath:AT5G02170"/>
<dbReference type="Araport" id="AT5G02170"/>
<dbReference type="TAIR" id="AT5G02170"/>
<dbReference type="eggNOG" id="KOG1303">
    <property type="taxonomic scope" value="Eukaryota"/>
</dbReference>
<dbReference type="InParanoid" id="Q8LPF4"/>
<dbReference type="OMA" id="FGCACVG"/>
<dbReference type="PhylomeDB" id="Q8LPF4"/>
<dbReference type="PRO" id="PR:Q8LPF4"/>
<dbReference type="Proteomes" id="UP000006548">
    <property type="component" value="Chromosome 5"/>
</dbReference>
<dbReference type="ExpressionAtlas" id="Q8LPF4">
    <property type="expression patterns" value="baseline and differential"/>
</dbReference>
<dbReference type="GO" id="GO:0031090">
    <property type="term" value="C:organelle membrane"/>
    <property type="evidence" value="ECO:0007669"/>
    <property type="project" value="UniProtKB-ARBA"/>
</dbReference>
<dbReference type="GO" id="GO:0006865">
    <property type="term" value="P:amino acid transport"/>
    <property type="evidence" value="ECO:0007669"/>
    <property type="project" value="UniProtKB-KW"/>
</dbReference>
<dbReference type="FunFam" id="1.20.1740.10:FF:000047">
    <property type="entry name" value="Amino acid transporter AVT1A"/>
    <property type="match status" value="1"/>
</dbReference>
<dbReference type="InterPro" id="IPR013057">
    <property type="entry name" value="AA_transpt_TM"/>
</dbReference>
<dbReference type="PANTHER" id="PTHR22950">
    <property type="entry name" value="AMINO ACID TRANSPORTER"/>
    <property type="match status" value="1"/>
</dbReference>
<dbReference type="PANTHER" id="PTHR22950:SF692">
    <property type="entry name" value="TRANSMEMBRANE AMINO ACID TRANSPORTER FAMILY PROTEIN"/>
    <property type="match status" value="1"/>
</dbReference>
<dbReference type="Pfam" id="PF01490">
    <property type="entry name" value="Aa_trans"/>
    <property type="match status" value="1"/>
</dbReference>
<proteinExistence type="evidence at transcript level"/>
<name>AVT1E_ARATH</name>
<organism>
    <name type="scientific">Arabidopsis thaliana</name>
    <name type="common">Mouse-ear cress</name>
    <dbReference type="NCBI Taxonomy" id="3702"/>
    <lineage>
        <taxon>Eukaryota</taxon>
        <taxon>Viridiplantae</taxon>
        <taxon>Streptophyta</taxon>
        <taxon>Embryophyta</taxon>
        <taxon>Tracheophyta</taxon>
        <taxon>Spermatophyta</taxon>
        <taxon>Magnoliopsida</taxon>
        <taxon>eudicotyledons</taxon>
        <taxon>Gunneridae</taxon>
        <taxon>Pentapetalae</taxon>
        <taxon>rosids</taxon>
        <taxon>malvids</taxon>
        <taxon>Brassicales</taxon>
        <taxon>Brassicaceae</taxon>
        <taxon>Camelineae</taxon>
        <taxon>Arabidopsis</taxon>
    </lineage>
</organism>
<feature type="chain" id="PRO_0000440106" description="Amino acid transporter AVT1E">
    <location>
        <begin position="1"/>
        <end position="526"/>
    </location>
</feature>
<feature type="transmembrane region" description="Helical; Name=1" evidence="1">
    <location>
        <begin position="140"/>
        <end position="160"/>
    </location>
</feature>
<feature type="transmembrane region" description="Helical; Name=2" evidence="1">
    <location>
        <begin position="165"/>
        <end position="185"/>
    </location>
</feature>
<feature type="transmembrane region" description="Helical; Name=3" evidence="1">
    <location>
        <begin position="212"/>
        <end position="232"/>
    </location>
</feature>
<feature type="transmembrane region" description="Helical; Name=4" evidence="1">
    <location>
        <begin position="253"/>
        <end position="273"/>
    </location>
</feature>
<feature type="transmembrane region" description="Helical; Name=5" evidence="1">
    <location>
        <begin position="278"/>
        <end position="298"/>
    </location>
</feature>
<feature type="transmembrane region" description="Helical; Name=6" evidence="1">
    <location>
        <begin position="320"/>
        <end position="340"/>
    </location>
</feature>
<feature type="transmembrane region" description="Helical; Name=7" evidence="1">
    <location>
        <begin position="353"/>
        <end position="373"/>
    </location>
</feature>
<feature type="transmembrane region" description="Helical; Name=8" evidence="1">
    <location>
        <begin position="397"/>
        <end position="417"/>
    </location>
</feature>
<feature type="transmembrane region" description="Helical; Name=9" evidence="1">
    <location>
        <begin position="436"/>
        <end position="456"/>
    </location>
</feature>
<feature type="transmembrane region" description="Helical; Name=10" evidence="1">
    <location>
        <begin position="458"/>
        <end position="478"/>
    </location>
</feature>
<feature type="transmembrane region" description="Helical; Name=11" evidence="1">
    <location>
        <begin position="494"/>
        <end position="514"/>
    </location>
</feature>
<feature type="region of interest" description="Disordered" evidence="2">
    <location>
        <begin position="1"/>
        <end position="49"/>
    </location>
</feature>
<feature type="compositionally biased region" description="Basic and acidic residues" evidence="2">
    <location>
        <begin position="8"/>
        <end position="18"/>
    </location>
</feature>
<protein>
    <recommendedName>
        <fullName evidence="4">Amino acid transporter AVT1E</fullName>
        <shortName evidence="3">AtAvt1E</shortName>
    </recommendedName>
</protein>
<evidence type="ECO:0000255" key="1"/>
<evidence type="ECO:0000256" key="2">
    <source>
        <dbReference type="SAM" id="MobiDB-lite"/>
    </source>
</evidence>
<evidence type="ECO:0000303" key="3">
    <source>
    </source>
</evidence>
<evidence type="ECO:0000305" key="4"/>
<evidence type="ECO:0000312" key="5">
    <source>
        <dbReference type="Araport" id="AT5G02170"/>
    </source>
</evidence>
<evidence type="ECO:0000312" key="6">
    <source>
        <dbReference type="EMBL" id="CAB82990.1"/>
    </source>
</evidence>
<sequence>MKQNETFDQEREDLYHTFDEEDEESQTESSVPSTPLSRNRSEDVPVPWPRSYRQSMDLLTGVTPPTSTSFVSSFRQRRQSSVFGSFTSSPSKQQLLIDKDEIQSSVVSSIKSFLASHLQLSVPGDLLTPQENRSCTFSQSVLNGINVLCGVALLTMPYAVKEGGWLGLFILFSFGIITFYTGILLKRCLENSPGIHTYPDIGQAAFGTTGRILVSILLYVELYASCVEYIIMMSDNLSRMFPNTSLYINGFSLDSTQVFAITTTLIVLPTVWLKDLSLLSYLSAGGVISSILLALCLFWAGSVDGVGFHISGQALDITNIPVAIGIYGFGFGSHSVFPNIYSSMKEPSKFPTVLLISFAFCTLFYIAVAVCGFTMFGDAIQSQFTLNMPPHFTSSKIAVWTAVVTPMTKYALTITPVMLSLEELIPSSSRKMRSKGVSMLFRTILVLSTLVVALTVPFFATVAALIGSFIAMLIALIFPCLCYISIMKGRLTNFQIGICILIVIIGIVSGCCGTYSAIARLIGEMT</sequence>
<accession>Q8LPF4</accession>
<accession>Q9LZL5</accession>
<comment type="subcellular location">
    <subcellularLocation>
        <location evidence="1">Membrane</location>
        <topology evidence="1">Multi-pass membrane protein</topology>
    </subcellularLocation>
</comment>
<comment type="alternative products">
    <event type="alternative splicing"/>
    <isoform>
        <id>Q8LPF4-1</id>
        <name>1</name>
        <sequence type="displayed"/>
    </isoform>
    <text evidence="4">Additional isoforms seem to exist.</text>
</comment>
<comment type="similarity">
    <text evidence="4">Belongs to the amino acid/polyamine transporter 2 family. Amino acid/auxin permease (AAAP) (TC 2.A.18.5) subfamily.</text>
</comment>
<comment type="sequence caution" evidence="4">
    <conflict type="erroneous gene model prediction">
        <sequence resource="EMBL-CDS" id="CAB82990"/>
    </conflict>
</comment>